<comment type="function">
    <text evidence="1 4">Protein O-mannosyltransferase that catalyzes the transfer of a single mannose residue from a polyprenol phospho-mannosyl lipidic donor to the hydroxyl group of selected serine and threonine residues in acceptor proteins (By similarity). Involved in DNA conjugation, in at least the recipient strain (PubMed:18554329).</text>
</comment>
<comment type="pathway">
    <text evidence="1">Protein modification; protein glycosylation.</text>
</comment>
<comment type="subcellular location">
    <subcellularLocation>
        <location evidence="1">Cell membrane</location>
        <topology evidence="2">Multi-pass membrane protein</topology>
    </subcellularLocation>
</comment>
<comment type="disruption phenotype">
    <text evidence="4">Loss of DNA conjugation when disrupted in recipient strain, strain does not secrete EsxB (PubMed:18554329).</text>
</comment>
<comment type="miscellaneous">
    <text evidence="7">DNA conjugation in M.smegmatis is unidirectional with distinct donor and recipient strains; mc(2)155 is a donor strain while MKD8 is a recipient strain. Mutations in a donor strain that alter DNA transfer do not always alter DNA transfer in a recipient strain.</text>
</comment>
<comment type="similarity">
    <text evidence="6">Belongs to the glycosyltransferase 39 family.</text>
</comment>
<comment type="sequence caution" evidence="6">
    <conflict type="erroneous initiation">
        <sequence resource="EMBL-CDS" id="AWT56277"/>
    </conflict>
    <text>Truncated N-terminus.</text>
</comment>
<accession>L8F4Z2</accession>
<accession>A0A2U9PX03</accession>
<proteinExistence type="inferred from homology"/>
<evidence type="ECO:0000250" key="1">
    <source>
        <dbReference type="UniProtKB" id="P9WN05"/>
    </source>
</evidence>
<evidence type="ECO:0000255" key="2"/>
<evidence type="ECO:0000256" key="3">
    <source>
        <dbReference type="SAM" id="MobiDB-lite"/>
    </source>
</evidence>
<evidence type="ECO:0000269" key="4">
    <source>
    </source>
</evidence>
<evidence type="ECO:0000303" key="5">
    <source>
    </source>
</evidence>
<evidence type="ECO:0000305" key="6"/>
<evidence type="ECO:0000305" key="7">
    <source>
    </source>
</evidence>
<evidence type="ECO:0000312" key="8">
    <source>
        <dbReference type="EMBL" id="AWT56277.1"/>
    </source>
</evidence>
<gene>
    <name type="primary">pmt</name>
    <name evidence="5" type="ORF">5447</name>
    <name evidence="8" type="ORF">D806_053290</name>
    <name type="ORF">D806_5507</name>
</gene>
<protein>
    <recommendedName>
        <fullName evidence="1">Polyprenol-phosphate-mannose--protein mannosyltransferase</fullName>
        <ecNumber evidence="1">2.4.1.-</ecNumber>
    </recommendedName>
    <alternativeName>
        <fullName evidence="1">Protein O-mannosyltransferase</fullName>
        <shortName evidence="1">PMT</shortName>
    </alternativeName>
</protein>
<reference evidence="8" key="1">
    <citation type="journal article" date="2013" name="Genome Announc.">
        <title>Draft genome sequence of MKD8, a conjugal recipient Mycobacterium smegmatis strain.</title>
        <authorList>
            <person name="Gray T.A."/>
            <person name="Palumbo M.J."/>
            <person name="Derbyshire K.M."/>
        </authorList>
    </citation>
    <scope>NUCLEOTIDE SEQUENCE [LARGE SCALE GENOMIC DNA]</scope>
    <source>
        <strain>MKD8</strain>
    </source>
</reference>
<reference evidence="8" key="2">
    <citation type="submission" date="2018-03" db="EMBL/GenBank/DDBJ databases">
        <authorList>
            <person name="Derbyshire K."/>
            <person name="Gray T.A."/>
            <person name="Champion M."/>
        </authorList>
    </citation>
    <scope>NUCLEOTIDE SEQUENCE [LARGE SCALE GENOMIC DNA]</scope>
    <source>
        <strain>MKD8</strain>
    </source>
</reference>
<reference key="3">
    <citation type="journal article" date="2008" name="Mol. Microbiol.">
        <title>The specialized secretory apparatus ESX-1 is essential for DNA transfer in Mycobacterium smegmatis.</title>
        <authorList>
            <person name="Coros A."/>
            <person name="Callahan B."/>
            <person name="Battaglioli E."/>
            <person name="Derbyshire K.M."/>
        </authorList>
    </citation>
    <scope>FUNCTION</scope>
    <scope>DISRUPTION PHENOTYPE</scope>
    <source>
        <strain>MKD8</strain>
    </source>
</reference>
<feature type="chain" id="PRO_0000438349" description="Polyprenol-phosphate-mannose--protein mannosyltransferase">
    <location>
        <begin position="1"/>
        <end position="516"/>
    </location>
</feature>
<feature type="transmembrane region" description="Helical" evidence="2">
    <location>
        <begin position="113"/>
        <end position="133"/>
    </location>
</feature>
<feature type="transmembrane region" description="Helical" evidence="2">
    <location>
        <begin position="143"/>
        <end position="163"/>
    </location>
</feature>
<feature type="transmembrane region" description="Helical" evidence="2">
    <location>
        <begin position="166"/>
        <end position="186"/>
    </location>
</feature>
<feature type="transmembrane region" description="Helical" evidence="2">
    <location>
        <begin position="234"/>
        <end position="254"/>
    </location>
</feature>
<feature type="transmembrane region" description="Helical" evidence="2">
    <location>
        <begin position="275"/>
        <end position="295"/>
    </location>
</feature>
<feature type="transmembrane region" description="Helical" evidence="2">
    <location>
        <begin position="384"/>
        <end position="404"/>
    </location>
</feature>
<feature type="transmembrane region" description="Helical" evidence="2">
    <location>
        <begin position="413"/>
        <end position="433"/>
    </location>
</feature>
<feature type="transmembrane region" description="Helical" evidence="2">
    <location>
        <begin position="437"/>
        <end position="457"/>
    </location>
</feature>
<feature type="transmembrane region" description="Helical" evidence="2">
    <location>
        <begin position="473"/>
        <end position="493"/>
    </location>
</feature>
<feature type="region of interest" description="Disordered" evidence="3">
    <location>
        <begin position="1"/>
        <end position="23"/>
    </location>
</feature>
<feature type="compositionally biased region" description="Polar residues" evidence="3">
    <location>
        <begin position="1"/>
        <end position="11"/>
    </location>
</feature>
<keyword id="KW-1003">Cell membrane</keyword>
<keyword id="KW-0328">Glycosyltransferase</keyword>
<keyword id="KW-0472">Membrane</keyword>
<keyword id="KW-0808">Transferase</keyword>
<keyword id="KW-0812">Transmembrane</keyword>
<keyword id="KW-1133">Transmembrane helix</keyword>
<name>PMT_MYCSE</name>
<dbReference type="EC" id="2.4.1.-" evidence="1"/>
<dbReference type="EMBL" id="CP027541">
    <property type="protein sequence ID" value="AWT56277.1"/>
    <property type="status" value="ALT_INIT"/>
    <property type="molecule type" value="Genomic_DNA"/>
</dbReference>
<dbReference type="RefSeq" id="WP_003896844.1">
    <property type="nucleotide sequence ID" value="NZ_CP027541.1"/>
</dbReference>
<dbReference type="SMR" id="L8F4Z2"/>
<dbReference type="PATRIC" id="fig|1214915.3.peg.5534"/>
<dbReference type="HOGENOM" id="CLU_021079_1_0_11"/>
<dbReference type="UniPathway" id="UPA00378"/>
<dbReference type="Proteomes" id="UP000011200">
    <property type="component" value="Chromosome"/>
</dbReference>
<dbReference type="GO" id="GO:0005886">
    <property type="term" value="C:plasma membrane"/>
    <property type="evidence" value="ECO:0007669"/>
    <property type="project" value="UniProtKB-SubCell"/>
</dbReference>
<dbReference type="GO" id="GO:0004169">
    <property type="term" value="F:dolichyl-phosphate-mannose-protein mannosyltransferase activity"/>
    <property type="evidence" value="ECO:0007669"/>
    <property type="project" value="UniProtKB-EC"/>
</dbReference>
<dbReference type="InterPro" id="IPR027005">
    <property type="entry name" value="GlyclTrfase_39-like"/>
</dbReference>
<dbReference type="InterPro" id="IPR003342">
    <property type="entry name" value="Glyco_trans_39/83"/>
</dbReference>
<dbReference type="InterPro" id="IPR032421">
    <property type="entry name" value="PMT_4TMC"/>
</dbReference>
<dbReference type="PANTHER" id="PTHR10050">
    <property type="entry name" value="DOLICHYL-PHOSPHATE-MANNOSE--PROTEIN MANNOSYLTRANSFERASE"/>
    <property type="match status" value="1"/>
</dbReference>
<dbReference type="PANTHER" id="PTHR10050:SF46">
    <property type="entry name" value="PROTEIN O-MANNOSYL-TRANSFERASE 2"/>
    <property type="match status" value="1"/>
</dbReference>
<dbReference type="Pfam" id="PF02366">
    <property type="entry name" value="PMT"/>
    <property type="match status" value="1"/>
</dbReference>
<dbReference type="Pfam" id="PF16192">
    <property type="entry name" value="PMT_4TMC"/>
    <property type="match status" value="1"/>
</dbReference>
<organism>
    <name type="scientific">Mycolicibacterium smegmatis (strain MKD8)</name>
    <name type="common">Mycobacterium smegmatis</name>
    <dbReference type="NCBI Taxonomy" id="1214915"/>
    <lineage>
        <taxon>Bacteria</taxon>
        <taxon>Bacillati</taxon>
        <taxon>Actinomycetota</taxon>
        <taxon>Actinomycetes</taxon>
        <taxon>Mycobacteriales</taxon>
        <taxon>Mycobacteriaceae</taxon>
        <taxon>Mycolicibacterium</taxon>
    </lineage>
</organism>
<sequence>MTALDTDTPTAGRSAPLISPGPVIPPPDFGPLDRAQGWAMTAIITALAAITRFLNLGSPTDAGTPIFDEKHYAPQAWQVLHNDGVEDNPGYGLVVHPPVGKQLIAIGEWLFGYNGLGWRFSGAVCGVIIVMLVTRIARRISRSTLVGAIAGLLIIADGVSFVSSRTALLDVFLVMFAVAAFACLMVDRDQVRERMYHAFLDGRIAETRWGPRLGVRWWRFGAGVLLGLACATKWSGLYFVLFFGVMTLVFDAIARKQYHVPHPWRGMLRRDLGPAAYVFGLIPFAVYLASYAPWFASETAVNRYEVGRSIGPDSILPIPDALRSLWHYTHAAYRFHSNLTNADGNHHPWESKPWTWPMSLRPVLYAIDNQDVPGCGAQSCVKAVMLVGTPAMWFIAVPVLGWALWRTVVRRDWRYGAVLVGYMAGFLPWFADIDRQMYFFYATVMAPFLVLAIALILGDILYKPNQNPERRTLGLLTVCFYVALVITNFAWMYPILTGLPISQTTWNLQIWLPSWR</sequence>